<name>HISM_ECOL6</name>
<accession>P0AEU4</accession>
<accession>P20091</accession>
<accession>P76936</accession>
<feature type="chain" id="PRO_0000060046" description="Histidine/lysine/arginine/ornithine transport system permease protein HisM">
    <location>
        <begin position="1"/>
        <end position="238"/>
    </location>
</feature>
<feature type="topological domain" description="Periplasmic" evidence="5">
    <location>
        <begin position="1"/>
        <end position="26"/>
    </location>
</feature>
<feature type="transmembrane region" description="Helical" evidence="3">
    <location>
        <begin position="27"/>
        <end position="47"/>
    </location>
</feature>
<feature type="topological domain" description="Cytoplasmic" evidence="5">
    <location>
        <begin position="48"/>
        <end position="58"/>
    </location>
</feature>
<feature type="transmembrane region" description="Helical" evidence="3">
    <location>
        <begin position="59"/>
        <end position="79"/>
    </location>
</feature>
<feature type="topological domain" description="Periplasmic" evidence="5">
    <location>
        <begin position="80"/>
        <end position="104"/>
    </location>
</feature>
<feature type="transmembrane region" description="Helical" evidence="3">
    <location>
        <begin position="105"/>
        <end position="125"/>
    </location>
</feature>
<feature type="topological domain" description="Cytoplasmic" evidence="5">
    <location>
        <begin position="126"/>
        <end position="157"/>
    </location>
</feature>
<feature type="transmembrane region" description="Helical" evidence="3">
    <location>
        <begin position="158"/>
        <end position="178"/>
    </location>
</feature>
<feature type="topological domain" description="Periplasmic" evidence="5">
    <location>
        <begin position="179"/>
        <end position="199"/>
    </location>
</feature>
<feature type="transmembrane region" description="Helical" evidence="3">
    <location>
        <begin position="200"/>
        <end position="220"/>
    </location>
</feature>
<feature type="topological domain" description="Cytoplasmic" evidence="2">
    <location>
        <begin position="221"/>
        <end position="238"/>
    </location>
</feature>
<feature type="domain" description="ABC transmembrane type-1" evidence="4">
    <location>
        <begin position="23"/>
        <end position="221"/>
    </location>
</feature>
<evidence type="ECO:0000250" key="1">
    <source>
        <dbReference type="UniProtKB" id="P0A2I7"/>
    </source>
</evidence>
<evidence type="ECO:0000250" key="2">
    <source>
        <dbReference type="UniProtKB" id="P0AEU3"/>
    </source>
</evidence>
<evidence type="ECO:0000255" key="3"/>
<evidence type="ECO:0000255" key="4">
    <source>
        <dbReference type="PROSITE-ProRule" id="PRU00441"/>
    </source>
</evidence>
<evidence type="ECO:0000305" key="5"/>
<comment type="function">
    <text evidence="1">Part of the ABC transporter complex HisPMQJ involved in histidine transport. Is also part of the ABC transporter complex HisPMQ-ArgT involved in lysine/arginine/ornithine transport. Probably responsible for the translocation of the substrate across the membrane.</text>
</comment>
<comment type="subunit">
    <text evidence="1">The HisPMQJ complex is composed of two ATP-binding proteins (HisP), two transmembrane proteins (HisM and HisQ) and a solute-binding protein (HisJ). The HisPMQ-ArgT complex is composed of two ATP-binding proteins (HisP), two transmembrane proteins (HisM and HisQ) and a solute-binding protein (ArgT).</text>
</comment>
<comment type="subcellular location">
    <subcellularLocation>
        <location evidence="1">Cell inner membrane</location>
        <topology evidence="1">Multi-pass membrane protein</topology>
    </subcellularLocation>
</comment>
<comment type="similarity">
    <text evidence="5">Belongs to the binding-protein-dependent transport system permease family. HisMQ subfamily.</text>
</comment>
<reference key="1">
    <citation type="journal article" date="2002" name="Proc. Natl. Acad. Sci. U.S.A.">
        <title>Extensive mosaic structure revealed by the complete genome sequence of uropathogenic Escherichia coli.</title>
        <authorList>
            <person name="Welch R.A."/>
            <person name="Burland V."/>
            <person name="Plunkett G. III"/>
            <person name="Redford P."/>
            <person name="Roesch P."/>
            <person name="Rasko D."/>
            <person name="Buckles E.L."/>
            <person name="Liou S.-R."/>
            <person name="Boutin A."/>
            <person name="Hackett J."/>
            <person name="Stroud D."/>
            <person name="Mayhew G.F."/>
            <person name="Rose D.J."/>
            <person name="Zhou S."/>
            <person name="Schwartz D.C."/>
            <person name="Perna N.T."/>
            <person name="Mobley H.L.T."/>
            <person name="Donnenberg M.S."/>
            <person name="Blattner F.R."/>
        </authorList>
    </citation>
    <scope>NUCLEOTIDE SEQUENCE [LARGE SCALE GENOMIC DNA]</scope>
    <source>
        <strain>CFT073 / ATCC 700928 / UPEC</strain>
    </source>
</reference>
<protein>
    <recommendedName>
        <fullName evidence="1">Histidine/lysine/arginine/ornithine transport system permease protein HisM</fullName>
    </recommendedName>
</protein>
<organism>
    <name type="scientific">Escherichia coli O6:H1 (strain CFT073 / ATCC 700928 / UPEC)</name>
    <dbReference type="NCBI Taxonomy" id="199310"/>
    <lineage>
        <taxon>Bacteria</taxon>
        <taxon>Pseudomonadati</taxon>
        <taxon>Pseudomonadota</taxon>
        <taxon>Gammaproteobacteria</taxon>
        <taxon>Enterobacterales</taxon>
        <taxon>Enterobacteriaceae</taxon>
        <taxon>Escherichia</taxon>
    </lineage>
</organism>
<keyword id="KW-0029">Amino-acid transport</keyword>
<keyword id="KW-0997">Cell inner membrane</keyword>
<keyword id="KW-1003">Cell membrane</keyword>
<keyword id="KW-0472">Membrane</keyword>
<keyword id="KW-1185">Reference proteome</keyword>
<keyword id="KW-0812">Transmembrane</keyword>
<keyword id="KW-1133">Transmembrane helix</keyword>
<keyword id="KW-0813">Transport</keyword>
<gene>
    <name type="primary">hisM</name>
    <name type="ordered locus">c2849</name>
</gene>
<proteinExistence type="inferred from homology"/>
<dbReference type="EMBL" id="AE014075">
    <property type="protein sequence ID" value="AAN81303.1"/>
    <property type="molecule type" value="Genomic_DNA"/>
</dbReference>
<dbReference type="RefSeq" id="WP_000569958.1">
    <property type="nucleotide sequence ID" value="NZ_CP051263.1"/>
</dbReference>
<dbReference type="SMR" id="P0AEU4"/>
<dbReference type="STRING" id="199310.c2849"/>
<dbReference type="KEGG" id="ecc:c2849"/>
<dbReference type="eggNOG" id="COG4160">
    <property type="taxonomic scope" value="Bacteria"/>
</dbReference>
<dbReference type="HOGENOM" id="CLU_019602_1_4_6"/>
<dbReference type="BioCyc" id="ECOL199310:C2849-MONOMER"/>
<dbReference type="Proteomes" id="UP000001410">
    <property type="component" value="Chromosome"/>
</dbReference>
<dbReference type="GO" id="GO:0043190">
    <property type="term" value="C:ATP-binding cassette (ABC) transporter complex"/>
    <property type="evidence" value="ECO:0007669"/>
    <property type="project" value="InterPro"/>
</dbReference>
<dbReference type="GO" id="GO:0022857">
    <property type="term" value="F:transmembrane transporter activity"/>
    <property type="evidence" value="ECO:0007669"/>
    <property type="project" value="InterPro"/>
</dbReference>
<dbReference type="GO" id="GO:0006865">
    <property type="term" value="P:amino acid transport"/>
    <property type="evidence" value="ECO:0007669"/>
    <property type="project" value="UniProtKB-KW"/>
</dbReference>
<dbReference type="CDD" id="cd06261">
    <property type="entry name" value="TM_PBP2"/>
    <property type="match status" value="1"/>
</dbReference>
<dbReference type="FunFam" id="1.10.3720.10:FF:000012">
    <property type="entry name" value="Histidine ABC transporter permease HisM"/>
    <property type="match status" value="1"/>
</dbReference>
<dbReference type="Gene3D" id="1.10.3720.10">
    <property type="entry name" value="MetI-like"/>
    <property type="match status" value="1"/>
</dbReference>
<dbReference type="InterPro" id="IPR051322">
    <property type="entry name" value="AA_ABC_Transporter_Permease"/>
</dbReference>
<dbReference type="InterPro" id="IPR010065">
    <property type="entry name" value="AA_ABC_transptr_permease_3TM"/>
</dbReference>
<dbReference type="InterPro" id="IPR000515">
    <property type="entry name" value="MetI-like"/>
</dbReference>
<dbReference type="InterPro" id="IPR035906">
    <property type="entry name" value="MetI-like_sf"/>
</dbReference>
<dbReference type="NCBIfam" id="TIGR01726">
    <property type="entry name" value="HEQRo_perm_3TM"/>
    <property type="match status" value="1"/>
</dbReference>
<dbReference type="NCBIfam" id="NF011651">
    <property type="entry name" value="PRK15069.1"/>
    <property type="match status" value="1"/>
</dbReference>
<dbReference type="PANTHER" id="PTHR30450">
    <property type="entry name" value="ABC TRANSPORTER PERMEASE"/>
    <property type="match status" value="1"/>
</dbReference>
<dbReference type="PANTHER" id="PTHR30450:SF5">
    <property type="entry name" value="HISTIDINE TRANSPORT SYSTEM PERMEASE PROTEIN HISM"/>
    <property type="match status" value="1"/>
</dbReference>
<dbReference type="Pfam" id="PF00528">
    <property type="entry name" value="BPD_transp_1"/>
    <property type="match status" value="1"/>
</dbReference>
<dbReference type="SUPFAM" id="SSF161098">
    <property type="entry name" value="MetI-like"/>
    <property type="match status" value="1"/>
</dbReference>
<dbReference type="PROSITE" id="PS50928">
    <property type="entry name" value="ABC_TM1"/>
    <property type="match status" value="1"/>
</dbReference>
<sequence>MIEILHEYWKPLLWTDGYRFTGVAITLWLLILSVVIGGVLALFLAIGRVSSNKYIQFPIWLFTYIFRGTPLYVQLLVFYSGMYTLEIVKGTEFLNAFFRSGLNCTVLALTLNTCAYTTEIFAGAIRSVPHGEIEAARAYGFSTFKMYRCIILPSALRIALPAYSNEVILMLHSTALAFTATVPDLLKIARDINAATYQPFTAFGIAAVLYLIISYVLISLFRRAEKRWLQHVKPSSTH</sequence>